<accession>B1LIE4</accession>
<feature type="chain" id="PRO_1000125823" description="Nickel-responsive regulator">
    <location>
        <begin position="1"/>
        <end position="133"/>
    </location>
</feature>
<feature type="binding site" evidence="1">
    <location>
        <position position="76"/>
    </location>
    <ligand>
        <name>Ni(2+)</name>
        <dbReference type="ChEBI" id="CHEBI:49786"/>
    </ligand>
</feature>
<feature type="binding site" evidence="1">
    <location>
        <position position="87"/>
    </location>
    <ligand>
        <name>Ni(2+)</name>
        <dbReference type="ChEBI" id="CHEBI:49786"/>
    </ligand>
</feature>
<feature type="binding site" evidence="1">
    <location>
        <position position="89"/>
    </location>
    <ligand>
        <name>Ni(2+)</name>
        <dbReference type="ChEBI" id="CHEBI:49786"/>
    </ligand>
</feature>
<feature type="binding site" evidence="1">
    <location>
        <position position="95"/>
    </location>
    <ligand>
        <name>Ni(2+)</name>
        <dbReference type="ChEBI" id="CHEBI:49786"/>
    </ligand>
</feature>
<gene>
    <name evidence="1" type="primary">nikR</name>
    <name type="ordered locus">EcSMS35_3765</name>
</gene>
<reference key="1">
    <citation type="journal article" date="2008" name="J. Bacteriol.">
        <title>Insights into the environmental resistance gene pool from the genome sequence of the multidrug-resistant environmental isolate Escherichia coli SMS-3-5.</title>
        <authorList>
            <person name="Fricke W.F."/>
            <person name="Wright M.S."/>
            <person name="Lindell A.H."/>
            <person name="Harkins D.M."/>
            <person name="Baker-Austin C."/>
            <person name="Ravel J."/>
            <person name="Stepanauskas R."/>
        </authorList>
    </citation>
    <scope>NUCLEOTIDE SEQUENCE [LARGE SCALE GENOMIC DNA]</scope>
    <source>
        <strain>SMS-3-5 / SECEC</strain>
    </source>
</reference>
<sequence>MQRITITLDDDLLETLDSLSQRRGYNNRSEAIRDILRSALAQEATQQHGTQGFAVLSYVYEHEKRDLASRIVSTQHHHHDLSVATLHVHINHDDCLEIAVLKGDMGDVQHFADDVIAQRGVRHGHLQCLPKED</sequence>
<protein>
    <recommendedName>
        <fullName evidence="1">Nickel-responsive regulator</fullName>
    </recommendedName>
</protein>
<keyword id="KW-0238">DNA-binding</keyword>
<keyword id="KW-0479">Metal-binding</keyword>
<keyword id="KW-0533">Nickel</keyword>
<keyword id="KW-0678">Repressor</keyword>
<keyword id="KW-0804">Transcription</keyword>
<keyword id="KW-0805">Transcription regulation</keyword>
<name>NIKR_ECOSM</name>
<comment type="function">
    <text evidence="1">Transcriptional repressor of the nikABCDE operon. Is active in the presence of excessive concentrations of intracellular nickel.</text>
</comment>
<comment type="cofactor">
    <cofactor evidence="1">
        <name>Ni(2+)</name>
        <dbReference type="ChEBI" id="CHEBI:49786"/>
    </cofactor>
    <text evidence="1">Binds 1 nickel ion per subunit.</text>
</comment>
<comment type="subunit">
    <text evidence="1">Homotetramer.</text>
</comment>
<comment type="similarity">
    <text evidence="1">Belongs to the transcriptional regulatory CopG/NikR family.</text>
</comment>
<proteinExistence type="inferred from homology"/>
<evidence type="ECO:0000255" key="1">
    <source>
        <dbReference type="HAMAP-Rule" id="MF_00476"/>
    </source>
</evidence>
<dbReference type="EMBL" id="CP000970">
    <property type="protein sequence ID" value="ACB15557.1"/>
    <property type="molecule type" value="Genomic_DNA"/>
</dbReference>
<dbReference type="RefSeq" id="WP_001189000.1">
    <property type="nucleotide sequence ID" value="NC_010498.1"/>
</dbReference>
<dbReference type="SMR" id="B1LIE4"/>
<dbReference type="KEGG" id="ecm:EcSMS35_3765"/>
<dbReference type="HOGENOM" id="CLU_113319_1_4_6"/>
<dbReference type="Proteomes" id="UP000007011">
    <property type="component" value="Chromosome"/>
</dbReference>
<dbReference type="GO" id="GO:0003700">
    <property type="term" value="F:DNA-binding transcription factor activity"/>
    <property type="evidence" value="ECO:0007669"/>
    <property type="project" value="UniProtKB-UniRule"/>
</dbReference>
<dbReference type="GO" id="GO:0016151">
    <property type="term" value="F:nickel cation binding"/>
    <property type="evidence" value="ECO:0007669"/>
    <property type="project" value="UniProtKB-UniRule"/>
</dbReference>
<dbReference type="GO" id="GO:0043565">
    <property type="term" value="F:sequence-specific DNA binding"/>
    <property type="evidence" value="ECO:0007669"/>
    <property type="project" value="UniProtKB-ARBA"/>
</dbReference>
<dbReference type="GO" id="GO:0010045">
    <property type="term" value="P:response to nickel cation"/>
    <property type="evidence" value="ECO:0007669"/>
    <property type="project" value="InterPro"/>
</dbReference>
<dbReference type="CDD" id="cd22231">
    <property type="entry name" value="RHH_NikR_HicB-like"/>
    <property type="match status" value="1"/>
</dbReference>
<dbReference type="FunFam" id="1.10.1220.10:FF:000001">
    <property type="entry name" value="Nickel-responsive regulator"/>
    <property type="match status" value="1"/>
</dbReference>
<dbReference type="FunFam" id="3.30.70.1150:FF:000002">
    <property type="entry name" value="Nickel-responsive regulator"/>
    <property type="match status" value="1"/>
</dbReference>
<dbReference type="Gene3D" id="3.30.70.1150">
    <property type="entry name" value="ACT-like. Chain A, domain 2"/>
    <property type="match status" value="1"/>
</dbReference>
<dbReference type="Gene3D" id="1.10.1220.10">
    <property type="entry name" value="Met repressor-like"/>
    <property type="match status" value="1"/>
</dbReference>
<dbReference type="HAMAP" id="MF_00476">
    <property type="entry name" value="NikR"/>
    <property type="match status" value="1"/>
</dbReference>
<dbReference type="InterPro" id="IPR027271">
    <property type="entry name" value="Acetolactate_synth/TF_NikR_C"/>
</dbReference>
<dbReference type="InterPro" id="IPR045865">
    <property type="entry name" value="ACT-like_dom_sf"/>
</dbReference>
<dbReference type="InterPro" id="IPR013321">
    <property type="entry name" value="Arc_rbn_hlx_hlx"/>
</dbReference>
<dbReference type="InterPro" id="IPR002145">
    <property type="entry name" value="CopG"/>
</dbReference>
<dbReference type="InterPro" id="IPR050192">
    <property type="entry name" value="CopG/NikR_regulator"/>
</dbReference>
<dbReference type="InterPro" id="IPR022988">
    <property type="entry name" value="Ni_resp_reg_NikR"/>
</dbReference>
<dbReference type="InterPro" id="IPR014160">
    <property type="entry name" value="Nickel_NikR_proteobac"/>
</dbReference>
<dbReference type="InterPro" id="IPR010985">
    <property type="entry name" value="Ribbon_hlx_hlx"/>
</dbReference>
<dbReference type="InterPro" id="IPR014864">
    <property type="entry name" value="TF_NikR_Ni-bd_C"/>
</dbReference>
<dbReference type="NCBIfam" id="TIGR02793">
    <property type="entry name" value="nikR"/>
    <property type="match status" value="1"/>
</dbReference>
<dbReference type="NCBIfam" id="NF002815">
    <property type="entry name" value="PRK02967.1"/>
    <property type="match status" value="1"/>
</dbReference>
<dbReference type="NCBIfam" id="NF003381">
    <property type="entry name" value="PRK04460.1"/>
    <property type="match status" value="1"/>
</dbReference>
<dbReference type="PANTHER" id="PTHR34719">
    <property type="entry name" value="NICKEL-RESPONSIVE REGULATOR"/>
    <property type="match status" value="1"/>
</dbReference>
<dbReference type="PANTHER" id="PTHR34719:SF2">
    <property type="entry name" value="NICKEL-RESPONSIVE REGULATOR"/>
    <property type="match status" value="1"/>
</dbReference>
<dbReference type="Pfam" id="PF08753">
    <property type="entry name" value="NikR_C"/>
    <property type="match status" value="1"/>
</dbReference>
<dbReference type="Pfam" id="PF01402">
    <property type="entry name" value="RHH_1"/>
    <property type="match status" value="1"/>
</dbReference>
<dbReference type="SUPFAM" id="SSF55021">
    <property type="entry name" value="ACT-like"/>
    <property type="match status" value="1"/>
</dbReference>
<dbReference type="SUPFAM" id="SSF47598">
    <property type="entry name" value="Ribbon-helix-helix"/>
    <property type="match status" value="1"/>
</dbReference>
<organism>
    <name type="scientific">Escherichia coli (strain SMS-3-5 / SECEC)</name>
    <dbReference type="NCBI Taxonomy" id="439855"/>
    <lineage>
        <taxon>Bacteria</taxon>
        <taxon>Pseudomonadati</taxon>
        <taxon>Pseudomonadota</taxon>
        <taxon>Gammaproteobacteria</taxon>
        <taxon>Enterobacterales</taxon>
        <taxon>Enterobacteriaceae</taxon>
        <taxon>Escherichia</taxon>
    </lineage>
</organism>